<comment type="function">
    <text evidence="1">Catalyzes the anti-1,4-elimination of the C-3 phosphate and the C-6 proR hydrogen from 5-enolpyruvylshikimate-3-phosphate (EPSP) to yield chorismate, which is the branch point compound that serves as the starting substrate for the three terminal pathways of aromatic amino acid biosynthesis. This reaction introduces a second double bond into the aromatic ring system.</text>
</comment>
<comment type="catalytic activity">
    <reaction evidence="1">
        <text>5-O-(1-carboxyvinyl)-3-phosphoshikimate = chorismate + phosphate</text>
        <dbReference type="Rhea" id="RHEA:21020"/>
        <dbReference type="ChEBI" id="CHEBI:29748"/>
        <dbReference type="ChEBI" id="CHEBI:43474"/>
        <dbReference type="ChEBI" id="CHEBI:57701"/>
        <dbReference type="EC" id="4.2.3.5"/>
    </reaction>
</comment>
<comment type="cofactor">
    <cofactor evidence="1">
        <name>FMNH2</name>
        <dbReference type="ChEBI" id="CHEBI:57618"/>
    </cofactor>
    <text evidence="1">Reduced FMN (FMNH(2)).</text>
</comment>
<comment type="pathway">
    <text evidence="1">Metabolic intermediate biosynthesis; chorismate biosynthesis; chorismate from D-erythrose 4-phosphate and phosphoenolpyruvate: step 7/7.</text>
</comment>
<comment type="subunit">
    <text evidence="1">Homotetramer.</text>
</comment>
<comment type="similarity">
    <text evidence="1">Belongs to the chorismate synthase family.</text>
</comment>
<accession>Q0T2F6</accession>
<reference key="1">
    <citation type="journal article" date="2006" name="BMC Genomics">
        <title>Complete genome sequence of Shigella flexneri 5b and comparison with Shigella flexneri 2a.</title>
        <authorList>
            <person name="Nie H."/>
            <person name="Yang F."/>
            <person name="Zhang X."/>
            <person name="Yang J."/>
            <person name="Chen L."/>
            <person name="Wang J."/>
            <person name="Xiong Z."/>
            <person name="Peng J."/>
            <person name="Sun L."/>
            <person name="Dong J."/>
            <person name="Xue Y."/>
            <person name="Xu X."/>
            <person name="Chen S."/>
            <person name="Yao Z."/>
            <person name="Shen Y."/>
            <person name="Jin Q."/>
        </authorList>
    </citation>
    <scope>NUCLEOTIDE SEQUENCE [LARGE SCALE GENOMIC DNA]</scope>
    <source>
        <strain>8401</strain>
    </source>
</reference>
<name>AROC_SHIF8</name>
<evidence type="ECO:0000255" key="1">
    <source>
        <dbReference type="HAMAP-Rule" id="MF_00300"/>
    </source>
</evidence>
<gene>
    <name evidence="1" type="primary">aroC</name>
    <name type="ordered locus">SFV_2398</name>
</gene>
<protein>
    <recommendedName>
        <fullName evidence="1">Chorismate synthase</fullName>
        <shortName evidence="1">CS</shortName>
        <ecNumber evidence="1">4.2.3.5</ecNumber>
    </recommendedName>
    <alternativeName>
        <fullName evidence="1">5-enolpyruvylshikimate-3-phosphate phospholyase</fullName>
    </alternativeName>
</protein>
<organism>
    <name type="scientific">Shigella flexneri serotype 5b (strain 8401)</name>
    <dbReference type="NCBI Taxonomy" id="373384"/>
    <lineage>
        <taxon>Bacteria</taxon>
        <taxon>Pseudomonadati</taxon>
        <taxon>Pseudomonadota</taxon>
        <taxon>Gammaproteobacteria</taxon>
        <taxon>Enterobacterales</taxon>
        <taxon>Enterobacteriaceae</taxon>
        <taxon>Shigella</taxon>
    </lineage>
</organism>
<sequence>MAGNTIGQLFRVTTFGESHGLALGCIVDGVPPGIPLTEADLQHDLDRRRPGTSRYTTQRREPDQVKILSGVFEGVTTGTSIGLLIENTDQRSQDYSAIKDVFRPGHADYTYEQKYGLRDYRGGGRSSARETAMRVAAGAIAKKYLSEKFGIEIRGCLTQMGDIPLEIKDWSLVEQNPFFCPDPDKIDALDELMRALKKEGDSIGAKVTVVASGVPAGLGEPVFDRLDADIAHALMSINAVKGVEIGDGFDVVALRGSQNRDEITKDGFQSNHAGGIFGGISSGQQIIAHMALKPTSSITVPGRTINRFGEEVEMITKGRHDPCVGIRAVPIAEAMLAIVLMDHLLRQRAQNADVKTDIPRW</sequence>
<dbReference type="EC" id="4.2.3.5" evidence="1"/>
<dbReference type="EMBL" id="CP000266">
    <property type="protein sequence ID" value="ABF04509.1"/>
    <property type="molecule type" value="Genomic_DNA"/>
</dbReference>
<dbReference type="RefSeq" id="WP_000918473.1">
    <property type="nucleotide sequence ID" value="NC_008258.1"/>
</dbReference>
<dbReference type="SMR" id="Q0T2F6"/>
<dbReference type="KEGG" id="sfv:SFV_2398"/>
<dbReference type="HOGENOM" id="CLU_034547_0_2_6"/>
<dbReference type="UniPathway" id="UPA00053">
    <property type="reaction ID" value="UER00090"/>
</dbReference>
<dbReference type="Proteomes" id="UP000000659">
    <property type="component" value="Chromosome"/>
</dbReference>
<dbReference type="GO" id="GO:0005829">
    <property type="term" value="C:cytosol"/>
    <property type="evidence" value="ECO:0007669"/>
    <property type="project" value="TreeGrafter"/>
</dbReference>
<dbReference type="GO" id="GO:0004107">
    <property type="term" value="F:chorismate synthase activity"/>
    <property type="evidence" value="ECO:0007669"/>
    <property type="project" value="UniProtKB-UniRule"/>
</dbReference>
<dbReference type="GO" id="GO:0010181">
    <property type="term" value="F:FMN binding"/>
    <property type="evidence" value="ECO:0007669"/>
    <property type="project" value="TreeGrafter"/>
</dbReference>
<dbReference type="GO" id="GO:0008652">
    <property type="term" value="P:amino acid biosynthetic process"/>
    <property type="evidence" value="ECO:0007669"/>
    <property type="project" value="UniProtKB-KW"/>
</dbReference>
<dbReference type="GO" id="GO:0009073">
    <property type="term" value="P:aromatic amino acid family biosynthetic process"/>
    <property type="evidence" value="ECO:0007669"/>
    <property type="project" value="UniProtKB-KW"/>
</dbReference>
<dbReference type="GO" id="GO:0009423">
    <property type="term" value="P:chorismate biosynthetic process"/>
    <property type="evidence" value="ECO:0007669"/>
    <property type="project" value="UniProtKB-UniRule"/>
</dbReference>
<dbReference type="CDD" id="cd07304">
    <property type="entry name" value="Chorismate_synthase"/>
    <property type="match status" value="1"/>
</dbReference>
<dbReference type="FunFam" id="3.60.150.10:FF:000001">
    <property type="entry name" value="Chorismate synthase"/>
    <property type="match status" value="1"/>
</dbReference>
<dbReference type="Gene3D" id="3.60.150.10">
    <property type="entry name" value="Chorismate synthase AroC"/>
    <property type="match status" value="1"/>
</dbReference>
<dbReference type="HAMAP" id="MF_00300">
    <property type="entry name" value="Chorismate_synth"/>
    <property type="match status" value="1"/>
</dbReference>
<dbReference type="InterPro" id="IPR000453">
    <property type="entry name" value="Chorismate_synth"/>
</dbReference>
<dbReference type="InterPro" id="IPR035904">
    <property type="entry name" value="Chorismate_synth_AroC_sf"/>
</dbReference>
<dbReference type="InterPro" id="IPR020541">
    <property type="entry name" value="Chorismate_synthase_CS"/>
</dbReference>
<dbReference type="NCBIfam" id="TIGR00033">
    <property type="entry name" value="aroC"/>
    <property type="match status" value="1"/>
</dbReference>
<dbReference type="NCBIfam" id="NF003793">
    <property type="entry name" value="PRK05382.1"/>
    <property type="match status" value="1"/>
</dbReference>
<dbReference type="PANTHER" id="PTHR21085">
    <property type="entry name" value="CHORISMATE SYNTHASE"/>
    <property type="match status" value="1"/>
</dbReference>
<dbReference type="PANTHER" id="PTHR21085:SF0">
    <property type="entry name" value="CHORISMATE SYNTHASE"/>
    <property type="match status" value="1"/>
</dbReference>
<dbReference type="Pfam" id="PF01264">
    <property type="entry name" value="Chorismate_synt"/>
    <property type="match status" value="1"/>
</dbReference>
<dbReference type="PIRSF" id="PIRSF001456">
    <property type="entry name" value="Chorismate_synth"/>
    <property type="match status" value="1"/>
</dbReference>
<dbReference type="SUPFAM" id="SSF103263">
    <property type="entry name" value="Chorismate synthase, AroC"/>
    <property type="match status" value="1"/>
</dbReference>
<dbReference type="PROSITE" id="PS00787">
    <property type="entry name" value="CHORISMATE_SYNTHASE_1"/>
    <property type="match status" value="1"/>
</dbReference>
<dbReference type="PROSITE" id="PS00788">
    <property type="entry name" value="CHORISMATE_SYNTHASE_2"/>
    <property type="match status" value="1"/>
</dbReference>
<dbReference type="PROSITE" id="PS00789">
    <property type="entry name" value="CHORISMATE_SYNTHASE_3"/>
    <property type="match status" value="1"/>
</dbReference>
<keyword id="KW-0028">Amino-acid biosynthesis</keyword>
<keyword id="KW-0057">Aromatic amino acid biosynthesis</keyword>
<keyword id="KW-0274">FAD</keyword>
<keyword id="KW-0285">Flavoprotein</keyword>
<keyword id="KW-0288">FMN</keyword>
<keyword id="KW-0456">Lyase</keyword>
<keyword id="KW-0521">NADP</keyword>
<proteinExistence type="inferred from homology"/>
<feature type="chain" id="PRO_1000022555" description="Chorismate synthase">
    <location>
        <begin position="1"/>
        <end position="361"/>
    </location>
</feature>
<feature type="binding site" evidence="1">
    <location>
        <position position="48"/>
    </location>
    <ligand>
        <name>NADP(+)</name>
        <dbReference type="ChEBI" id="CHEBI:58349"/>
    </ligand>
</feature>
<feature type="binding site" evidence="1">
    <location>
        <position position="54"/>
    </location>
    <ligand>
        <name>NADP(+)</name>
        <dbReference type="ChEBI" id="CHEBI:58349"/>
    </ligand>
</feature>
<feature type="binding site" evidence="1">
    <location>
        <begin position="125"/>
        <end position="127"/>
    </location>
    <ligand>
        <name>FMN</name>
        <dbReference type="ChEBI" id="CHEBI:58210"/>
    </ligand>
</feature>
<feature type="binding site" evidence="1">
    <location>
        <begin position="238"/>
        <end position="239"/>
    </location>
    <ligand>
        <name>FMN</name>
        <dbReference type="ChEBI" id="CHEBI:58210"/>
    </ligand>
</feature>
<feature type="binding site" evidence="1">
    <location>
        <position position="278"/>
    </location>
    <ligand>
        <name>FMN</name>
        <dbReference type="ChEBI" id="CHEBI:58210"/>
    </ligand>
</feature>
<feature type="binding site" evidence="1">
    <location>
        <begin position="293"/>
        <end position="297"/>
    </location>
    <ligand>
        <name>FMN</name>
        <dbReference type="ChEBI" id="CHEBI:58210"/>
    </ligand>
</feature>
<feature type="binding site" evidence="1">
    <location>
        <position position="319"/>
    </location>
    <ligand>
        <name>FMN</name>
        <dbReference type="ChEBI" id="CHEBI:58210"/>
    </ligand>
</feature>